<accession>Q9HVC5</accession>
<reference key="1">
    <citation type="journal article" date="2000" name="Nature">
        <title>Complete genome sequence of Pseudomonas aeruginosa PAO1, an opportunistic pathogen.</title>
        <authorList>
            <person name="Stover C.K."/>
            <person name="Pham X.-Q.T."/>
            <person name="Erwin A.L."/>
            <person name="Mizoguchi S.D."/>
            <person name="Warrener P."/>
            <person name="Hickey M.J."/>
            <person name="Brinkman F.S.L."/>
            <person name="Hufnagle W.O."/>
            <person name="Kowalik D.J."/>
            <person name="Lagrou M."/>
            <person name="Garber R.L."/>
            <person name="Goltry L."/>
            <person name="Tolentino E."/>
            <person name="Westbrock-Wadman S."/>
            <person name="Yuan Y."/>
            <person name="Brody L.L."/>
            <person name="Coulter S.N."/>
            <person name="Folger K.R."/>
            <person name="Kas A."/>
            <person name="Larbig K."/>
            <person name="Lim R.M."/>
            <person name="Smith K.A."/>
            <person name="Spencer D.H."/>
            <person name="Wong G.K.-S."/>
            <person name="Wu Z."/>
            <person name="Paulsen I.T."/>
            <person name="Reizer J."/>
            <person name="Saier M.H. Jr."/>
            <person name="Hancock R.E.W."/>
            <person name="Lory S."/>
            <person name="Olson M.V."/>
        </authorList>
    </citation>
    <scope>NUCLEOTIDE SEQUENCE [LARGE SCALE GENOMIC DNA]</scope>
    <source>
        <strain>ATCC 15692 / DSM 22644 / CIP 104116 / JCM 14847 / LMG 12228 / 1C / PRS 101 / PAO1</strain>
    </source>
</reference>
<organism>
    <name type="scientific">Pseudomonas aeruginosa (strain ATCC 15692 / DSM 22644 / CIP 104116 / JCM 14847 / LMG 12228 / 1C / PRS 101 / PAO1)</name>
    <dbReference type="NCBI Taxonomy" id="208964"/>
    <lineage>
        <taxon>Bacteria</taxon>
        <taxon>Pseudomonadati</taxon>
        <taxon>Pseudomonadota</taxon>
        <taxon>Gammaproteobacteria</taxon>
        <taxon>Pseudomonadales</taxon>
        <taxon>Pseudomonadaceae</taxon>
        <taxon>Pseudomonas</taxon>
    </lineage>
</organism>
<comment type="function">
    <text evidence="1">Involved in the biosynthesis of the central metabolite phospho-alpha-D-ribosyl-1-pyrophosphate (PRPP) via the transfer of pyrophosphoryl group from ATP to 1-hydroxyl of ribose-5-phosphate (Rib-5-P).</text>
</comment>
<comment type="catalytic activity">
    <reaction evidence="1">
        <text>D-ribose 5-phosphate + ATP = 5-phospho-alpha-D-ribose 1-diphosphate + AMP + H(+)</text>
        <dbReference type="Rhea" id="RHEA:15609"/>
        <dbReference type="ChEBI" id="CHEBI:15378"/>
        <dbReference type="ChEBI" id="CHEBI:30616"/>
        <dbReference type="ChEBI" id="CHEBI:58017"/>
        <dbReference type="ChEBI" id="CHEBI:78346"/>
        <dbReference type="ChEBI" id="CHEBI:456215"/>
        <dbReference type="EC" id="2.7.6.1"/>
    </reaction>
</comment>
<comment type="cofactor">
    <cofactor evidence="1">
        <name>Mg(2+)</name>
        <dbReference type="ChEBI" id="CHEBI:18420"/>
    </cofactor>
    <text evidence="1">Binds 2 Mg(2+) ions per subunit.</text>
</comment>
<comment type="pathway">
    <text evidence="1">Metabolic intermediate biosynthesis; 5-phospho-alpha-D-ribose 1-diphosphate biosynthesis; 5-phospho-alpha-D-ribose 1-diphosphate from D-ribose 5-phosphate (route I): step 1/1.</text>
</comment>
<comment type="subunit">
    <text evidence="1">Homohexamer.</text>
</comment>
<comment type="subcellular location">
    <subcellularLocation>
        <location evidence="1">Cytoplasm</location>
    </subcellularLocation>
</comment>
<comment type="similarity">
    <text evidence="1">Belongs to the ribose-phosphate pyrophosphokinase family. Class I subfamily.</text>
</comment>
<keyword id="KW-0067">ATP-binding</keyword>
<keyword id="KW-0963">Cytoplasm</keyword>
<keyword id="KW-0418">Kinase</keyword>
<keyword id="KW-0460">Magnesium</keyword>
<keyword id="KW-0479">Metal-binding</keyword>
<keyword id="KW-0545">Nucleotide biosynthesis</keyword>
<keyword id="KW-0547">Nucleotide-binding</keyword>
<keyword id="KW-1185">Reference proteome</keyword>
<keyword id="KW-0808">Transferase</keyword>
<name>KPRS_PSEAE</name>
<feature type="chain" id="PRO_0000141176" description="Ribose-phosphate pyrophosphokinase">
    <location>
        <begin position="1"/>
        <end position="313"/>
    </location>
</feature>
<feature type="active site" evidence="1">
    <location>
        <position position="193"/>
    </location>
</feature>
<feature type="binding site" evidence="1">
    <location>
        <begin position="37"/>
        <end position="39"/>
    </location>
    <ligand>
        <name>ATP</name>
        <dbReference type="ChEBI" id="CHEBI:30616"/>
    </ligand>
</feature>
<feature type="binding site" evidence="1">
    <location>
        <begin position="96"/>
        <end position="97"/>
    </location>
    <ligand>
        <name>ATP</name>
        <dbReference type="ChEBI" id="CHEBI:30616"/>
    </ligand>
</feature>
<feature type="binding site" evidence="1">
    <location>
        <position position="131"/>
    </location>
    <ligand>
        <name>Mg(2+)</name>
        <dbReference type="ChEBI" id="CHEBI:18420"/>
        <label>1</label>
    </ligand>
</feature>
<feature type="binding site" evidence="1">
    <location>
        <position position="170"/>
    </location>
    <ligand>
        <name>Mg(2+)</name>
        <dbReference type="ChEBI" id="CHEBI:18420"/>
        <label>2</label>
    </ligand>
</feature>
<feature type="binding site" evidence="1">
    <location>
        <position position="195"/>
    </location>
    <ligand>
        <name>D-ribose 5-phosphate</name>
        <dbReference type="ChEBI" id="CHEBI:78346"/>
    </ligand>
</feature>
<feature type="binding site" evidence="1">
    <location>
        <position position="219"/>
    </location>
    <ligand>
        <name>D-ribose 5-phosphate</name>
        <dbReference type="ChEBI" id="CHEBI:78346"/>
    </ligand>
</feature>
<feature type="binding site" evidence="1">
    <location>
        <begin position="223"/>
        <end position="227"/>
    </location>
    <ligand>
        <name>D-ribose 5-phosphate</name>
        <dbReference type="ChEBI" id="CHEBI:78346"/>
    </ligand>
</feature>
<sequence length="313" mass="34040">MSKMMVFTGNANPDLARRVVRQLHIPLGDVSVGKFSDGEISVEINENVRGKDVFLIQPTCAPTNDNLMELVVMADAFRRSSATRITAVIPYFGYARQDRRPRSARVAISAKVVADMLTVVGVNRVLTVDLHADQIQGFFDIPVDNIYGSPVLVDDIEDQRFENLMIVSPDIGGVVRARAVAKSLGVDLAIIDKRRPKANQSEVMHIIGDVEGRTCVLVDDMVDTAGTLGHAAKALKEHGAAKVIAYCTHPVLSGRAIENIEKSVLDELVVTNTIPLSAAAQACGRIRQLDIAPVVAEAMRRISNEESISAMFR</sequence>
<proteinExistence type="inferred from homology"/>
<evidence type="ECO:0000255" key="1">
    <source>
        <dbReference type="HAMAP-Rule" id="MF_00583"/>
    </source>
</evidence>
<protein>
    <recommendedName>
        <fullName evidence="1">Ribose-phosphate pyrophosphokinase</fullName>
        <shortName evidence="1">RPPK</shortName>
        <ecNumber evidence="1">2.7.6.1</ecNumber>
    </recommendedName>
    <alternativeName>
        <fullName evidence="1">5-phospho-D-ribosyl alpha-1-diphosphate synthase</fullName>
    </alternativeName>
    <alternativeName>
        <fullName evidence="1">Phosphoribosyl diphosphate synthase</fullName>
    </alternativeName>
    <alternativeName>
        <fullName evidence="1">Phosphoribosyl pyrophosphate synthase</fullName>
        <shortName evidence="1">P-Rib-PP synthase</shortName>
        <shortName evidence="1">PRPP synthase</shortName>
        <shortName evidence="1">PRPPase</shortName>
    </alternativeName>
</protein>
<gene>
    <name evidence="1" type="primary">prs</name>
    <name type="ordered locus">PA4670</name>
</gene>
<dbReference type="EC" id="2.7.6.1" evidence="1"/>
<dbReference type="EMBL" id="AE004091">
    <property type="protein sequence ID" value="AAG08057.1"/>
    <property type="molecule type" value="Genomic_DNA"/>
</dbReference>
<dbReference type="PIR" id="G83063">
    <property type="entry name" value="G83063"/>
</dbReference>
<dbReference type="RefSeq" id="NP_253359.1">
    <property type="nucleotide sequence ID" value="NC_002516.2"/>
</dbReference>
<dbReference type="RefSeq" id="WP_003099281.1">
    <property type="nucleotide sequence ID" value="NZ_QZGE01000029.1"/>
</dbReference>
<dbReference type="SMR" id="Q9HVC5"/>
<dbReference type="FunCoup" id="Q9HVC5">
    <property type="interactions" value="859"/>
</dbReference>
<dbReference type="STRING" id="208964.PA4670"/>
<dbReference type="PaxDb" id="208964-PA4670"/>
<dbReference type="DNASU" id="881387"/>
<dbReference type="GeneID" id="881387"/>
<dbReference type="KEGG" id="pae:PA4670"/>
<dbReference type="PATRIC" id="fig|208964.12.peg.4892"/>
<dbReference type="PseudoCAP" id="PA4670"/>
<dbReference type="HOGENOM" id="CLU_033546_4_0_6"/>
<dbReference type="InParanoid" id="Q9HVC5"/>
<dbReference type="OrthoDB" id="9777067at2"/>
<dbReference type="PhylomeDB" id="Q9HVC5"/>
<dbReference type="BioCyc" id="PAER208964:G1FZ6-4767-MONOMER"/>
<dbReference type="UniPathway" id="UPA00087">
    <property type="reaction ID" value="UER00172"/>
</dbReference>
<dbReference type="Proteomes" id="UP000002438">
    <property type="component" value="Chromosome"/>
</dbReference>
<dbReference type="GO" id="GO:0005737">
    <property type="term" value="C:cytoplasm"/>
    <property type="evidence" value="ECO:0000318"/>
    <property type="project" value="GO_Central"/>
</dbReference>
<dbReference type="GO" id="GO:0002189">
    <property type="term" value="C:ribose phosphate diphosphokinase complex"/>
    <property type="evidence" value="ECO:0000318"/>
    <property type="project" value="GO_Central"/>
</dbReference>
<dbReference type="GO" id="GO:0005524">
    <property type="term" value="F:ATP binding"/>
    <property type="evidence" value="ECO:0007669"/>
    <property type="project" value="UniProtKB-KW"/>
</dbReference>
<dbReference type="GO" id="GO:0016301">
    <property type="term" value="F:kinase activity"/>
    <property type="evidence" value="ECO:0007669"/>
    <property type="project" value="UniProtKB-KW"/>
</dbReference>
<dbReference type="GO" id="GO:0000287">
    <property type="term" value="F:magnesium ion binding"/>
    <property type="evidence" value="ECO:0007669"/>
    <property type="project" value="UniProtKB-UniRule"/>
</dbReference>
<dbReference type="GO" id="GO:0004749">
    <property type="term" value="F:ribose phosphate diphosphokinase activity"/>
    <property type="evidence" value="ECO:0000318"/>
    <property type="project" value="GO_Central"/>
</dbReference>
<dbReference type="GO" id="GO:0006015">
    <property type="term" value="P:5-phosphoribose 1-diphosphate biosynthetic process"/>
    <property type="evidence" value="ECO:0000318"/>
    <property type="project" value="GO_Central"/>
</dbReference>
<dbReference type="GO" id="GO:0006164">
    <property type="term" value="P:purine nucleotide biosynthetic process"/>
    <property type="evidence" value="ECO:0000318"/>
    <property type="project" value="GO_Central"/>
</dbReference>
<dbReference type="GO" id="GO:0009156">
    <property type="term" value="P:ribonucleoside monophosphate biosynthetic process"/>
    <property type="evidence" value="ECO:0007669"/>
    <property type="project" value="InterPro"/>
</dbReference>
<dbReference type="CDD" id="cd06223">
    <property type="entry name" value="PRTases_typeI"/>
    <property type="match status" value="1"/>
</dbReference>
<dbReference type="FunFam" id="3.40.50.2020:FF:000001">
    <property type="entry name" value="Ribose-phosphate pyrophosphokinase"/>
    <property type="match status" value="1"/>
</dbReference>
<dbReference type="Gene3D" id="3.40.50.2020">
    <property type="match status" value="2"/>
</dbReference>
<dbReference type="HAMAP" id="MF_00583_B">
    <property type="entry name" value="RibP_PPkinase_B"/>
    <property type="match status" value="1"/>
</dbReference>
<dbReference type="InterPro" id="IPR000842">
    <property type="entry name" value="PRib_PP_synth_CS"/>
</dbReference>
<dbReference type="InterPro" id="IPR029099">
    <property type="entry name" value="Pribosyltran_N"/>
</dbReference>
<dbReference type="InterPro" id="IPR000836">
    <property type="entry name" value="PRibTrfase_dom"/>
</dbReference>
<dbReference type="InterPro" id="IPR029057">
    <property type="entry name" value="PRTase-like"/>
</dbReference>
<dbReference type="InterPro" id="IPR005946">
    <property type="entry name" value="Rib-P_diPkinase"/>
</dbReference>
<dbReference type="InterPro" id="IPR037515">
    <property type="entry name" value="Rib-P_diPkinase_bac"/>
</dbReference>
<dbReference type="NCBIfam" id="NF002320">
    <property type="entry name" value="PRK01259.1"/>
    <property type="match status" value="1"/>
</dbReference>
<dbReference type="NCBIfam" id="TIGR01251">
    <property type="entry name" value="ribP_PPkin"/>
    <property type="match status" value="1"/>
</dbReference>
<dbReference type="PANTHER" id="PTHR10210">
    <property type="entry name" value="RIBOSE-PHOSPHATE DIPHOSPHOKINASE FAMILY MEMBER"/>
    <property type="match status" value="1"/>
</dbReference>
<dbReference type="PANTHER" id="PTHR10210:SF41">
    <property type="entry name" value="RIBOSE-PHOSPHATE PYROPHOSPHOKINASE 1, CHLOROPLASTIC"/>
    <property type="match status" value="1"/>
</dbReference>
<dbReference type="Pfam" id="PF14572">
    <property type="entry name" value="Pribosyl_synth"/>
    <property type="match status" value="1"/>
</dbReference>
<dbReference type="Pfam" id="PF13793">
    <property type="entry name" value="Pribosyltran_N"/>
    <property type="match status" value="1"/>
</dbReference>
<dbReference type="SMART" id="SM01400">
    <property type="entry name" value="Pribosyltran_N"/>
    <property type="match status" value="1"/>
</dbReference>
<dbReference type="SUPFAM" id="SSF53271">
    <property type="entry name" value="PRTase-like"/>
    <property type="match status" value="1"/>
</dbReference>
<dbReference type="PROSITE" id="PS00114">
    <property type="entry name" value="PRPP_SYNTHASE"/>
    <property type="match status" value="1"/>
</dbReference>